<feature type="chain" id="PRO_0000442629" description="Orsellinic acid synthase armB">
    <location>
        <begin position="1"/>
        <end position="2209"/>
    </location>
</feature>
<feature type="domain" description="Ketosynthase family 3 (KS3)" evidence="5">
    <location>
        <begin position="391"/>
        <end position="817"/>
    </location>
</feature>
<feature type="domain" description="PKS/mFAS DH" evidence="6">
    <location>
        <begin position="1306"/>
        <end position="1613"/>
    </location>
</feature>
<feature type="domain" description="Carrier 1" evidence="4">
    <location>
        <begin position="1659"/>
        <end position="1734"/>
    </location>
</feature>
<feature type="domain" description="Carrier 2" evidence="4">
    <location>
        <begin position="1844"/>
        <end position="1921"/>
    </location>
</feature>
<feature type="region of interest" description="N-terminal acylcarrier protein transacylase domain (SAT)" evidence="3">
    <location>
        <begin position="38"/>
        <end position="261"/>
    </location>
</feature>
<feature type="region of interest" description="Malonyl-CoA:ACP transacylase (MAT) domain" evidence="3">
    <location>
        <begin position="914"/>
        <end position="1239"/>
    </location>
</feature>
<feature type="region of interest" description="N-terminal hotdog fold" evidence="6">
    <location>
        <begin position="1306"/>
        <end position="1436"/>
    </location>
</feature>
<feature type="region of interest" description="Product template (PT) domain" evidence="3">
    <location>
        <begin position="1335"/>
        <end position="1610"/>
    </location>
</feature>
<feature type="region of interest" description="C-terminal hotdog fold" evidence="6">
    <location>
        <begin position="1463"/>
        <end position="1613"/>
    </location>
</feature>
<feature type="region of interest" description="Disordered" evidence="7">
    <location>
        <begin position="1917"/>
        <end position="1945"/>
    </location>
</feature>
<feature type="region of interest" description="Thioesterase (TE) domain" evidence="3">
    <location>
        <begin position="1962"/>
        <end position="2201"/>
    </location>
</feature>
<feature type="compositionally biased region" description="Acidic residues" evidence="7">
    <location>
        <begin position="1932"/>
        <end position="1943"/>
    </location>
</feature>
<feature type="active site" description="For beta-ketoacyl synthase activity" evidence="5">
    <location>
        <position position="561"/>
    </location>
</feature>
<feature type="active site" description="For beta-ketoacyl synthase activity" evidence="5">
    <location>
        <position position="696"/>
    </location>
</feature>
<feature type="active site" description="For beta-ketoacyl synthase activity" evidence="5">
    <location>
        <position position="736"/>
    </location>
</feature>
<feature type="active site" description="For acyl/malonyl transferase activity" evidence="1">
    <location>
        <position position="1008"/>
    </location>
</feature>
<feature type="active site" description="Proton acceptor; for dehydratase activity" evidence="6">
    <location>
        <position position="1338"/>
    </location>
</feature>
<feature type="active site" description="Proton donor; for dehydratase activity" evidence="6">
    <location>
        <position position="1524"/>
    </location>
</feature>
<feature type="modified residue" description="O-(pantetheine 4'-phosphoryl)serine" evidence="4">
    <location>
        <position position="1693"/>
    </location>
</feature>
<feature type="modified residue" description="O-(pantetheine 4'-phosphoryl)serine" evidence="4">
    <location>
        <position position="1881"/>
    </location>
</feature>
<reference key="1">
    <citation type="journal article" date="2012" name="Fungal Genet. Biol.">
        <title>Genome mining reveals the evolutionary origin and biosynthetic potential of basidiomycete polyketide synthases.</title>
        <authorList>
            <person name="Lackner G."/>
            <person name="Misiek M."/>
            <person name="Braesel J."/>
            <person name="Hoffmeister D."/>
        </authorList>
    </citation>
    <scope>NUCLEOTIDE SEQUENCE [GENOMIC DNA]</scope>
    <source>
        <strain>DSM 3731</strain>
    </source>
</reference>
<reference key="2">
    <citation type="journal article" date="2013" name="Chem. Biol.">
        <title>Assembly of melleolide antibiotics involves a polyketide synthase with cross-coupling activity.</title>
        <authorList>
            <person name="Lackner G."/>
            <person name="Bohnert M."/>
            <person name="Wick J."/>
            <person name="Hoffmeister D."/>
        </authorList>
    </citation>
    <scope>FUNCTION</scope>
    <scope>CATALYTIC ACTIVITY</scope>
    <scope>PATHWAY</scope>
</reference>
<reference key="3">
    <citation type="journal article" date="2011" name="Bioorg. Med. Chem. Lett.">
        <title>In vitro cytotoxicity of melleolide antibiotics: structural and mechanistic aspects.</title>
        <authorList>
            <person name="Bohnert M."/>
            <person name="Miethbauer S."/>
            <person name="Dahse H.M."/>
            <person name="Ziemen J."/>
            <person name="Nett M."/>
            <person name="Hoffmeister D."/>
        </authorList>
    </citation>
    <scope>BIOTECHNOLOGY</scope>
</reference>
<reference key="4">
    <citation type="journal article" date="2013" name="Evid. Based Complement Alternat. Med.">
        <title>Therapeutic and radiosensitizing effects of armillaridin on human esophageal cancer cells.</title>
        <authorList>
            <person name="Chi C.W."/>
            <person name="Chen C.C."/>
            <person name="Chen Y.J."/>
        </authorList>
    </citation>
    <scope>BIOTECHNOLOGY</scope>
</reference>
<reference key="5">
    <citation type="journal article" date="2015" name="Appl. Environ. Microbiol.">
        <title>A fivefold parallelized biosynthetic process secures chlorination of Armillaria mellea (honey mushroom) toxins.</title>
        <authorList>
            <person name="Wick J."/>
            <person name="Heine D."/>
            <person name="Lackner G."/>
            <person name="Misiek M."/>
            <person name="Tauber J."/>
            <person name="Jagusch H."/>
            <person name="Hertweck C."/>
            <person name="Hoffmeister D."/>
        </authorList>
    </citation>
    <scope>FUNCTION</scope>
</reference>
<reference key="6">
    <citation type="journal article" date="2015" name="Int. J. Med. Mushrooms">
        <title>Armillaridin, a honey medicinal mushroom, Armillaria mellea (higher basidiomycetes) component, inhibits differentiation and activation of human macrophages.</title>
        <authorList>
            <person name="Liu T.P."/>
            <person name="Chen C.C."/>
            <person name="Shiao P.Y."/>
            <person name="Shieh H.R."/>
            <person name="Chen Y.Y."/>
            <person name="Chen Y.J."/>
        </authorList>
    </citation>
    <scope>BIOTECHNOLOGY</scope>
</reference>
<reference key="7">
    <citation type="journal article" date="2016" name="J. Ethnopharmacol.">
        <title>Structure, cytotoxic activity and mechanism of protoilludane sesquiterpene aryl esters from the mycelium of Armillaria mellea.</title>
        <authorList>
            <person name="Li Z."/>
            <person name="Wang Y."/>
            <person name="Jiang B."/>
            <person name="Li W."/>
            <person name="Zheng L."/>
            <person name="Yang X."/>
            <person name="Bao Y."/>
            <person name="Sun L."/>
            <person name="Huang Y."/>
            <person name="Li Y."/>
        </authorList>
    </citation>
    <scope>BIOTECHNOLOGY</scope>
</reference>
<reference key="8">
    <citation type="journal article" date="2016" name="Tumor Biol.">
        <title>Armillaridin induces autophagy-associated cell death in human chronic myelogenous leukemia K562 cells.</title>
        <authorList>
            <person name="Chang W.H."/>
            <person name="Huang H.L."/>
            <person name="Huang W.P."/>
            <person name="Chen C.C."/>
            <person name="Chen Y.J."/>
        </authorList>
    </citation>
    <scope>BIOTECHNOLOGY</scope>
</reference>
<reference key="9">
    <citation type="journal article" date="2018" name="Curr. Biol.">
        <title>Armillaria.</title>
        <authorList>
            <person name="Sipos G."/>
            <person name="Anderson J.B."/>
            <person name="Nagy L.G."/>
        </authorList>
    </citation>
    <scope>MISCELLANEOUS</scope>
</reference>
<reference key="10">
    <citation type="journal article" date="2019" name="Am. J. Chin. Med.">
        <title>Induction of autophagic death of human hepatocellular carcinoma cells by armillaridin from Armillaria mellea.</title>
        <authorList>
            <person name="Leu Y.S."/>
            <person name="Chen Y.J."/>
            <person name="Chen C.C."/>
            <person name="Huang H.L."/>
        </authorList>
    </citation>
    <scope>BIOTECHNOLOGY</scope>
</reference>
<reference key="11">
    <citation type="journal article" date="2020" name="Plant Dis.">
        <title>Susceptibility of garden trees and shrubs to Armillaria root rot.</title>
        <authorList>
            <person name="Cromey M.G."/>
            <person name="Drakulic J."/>
            <person name="Beal E.J."/>
            <person name="Waghorn I.A.G."/>
            <person name="Perry J.N."/>
            <person name="Clover G.R.G."/>
        </authorList>
    </citation>
    <scope>MISCELLANEOUS</scope>
</reference>
<keyword id="KW-0596">Phosphopantetheine</keyword>
<keyword id="KW-0597">Phosphoprotein</keyword>
<keyword id="KW-0808">Transferase</keyword>
<keyword id="KW-0843">Virulence</keyword>
<gene>
    <name evidence="17" type="primary">armB</name>
</gene>
<proteinExistence type="evidence at protein level"/>
<name>ARMB_ARMME</name>
<organism>
    <name type="scientific">Armillaria mellea</name>
    <name type="common">Honey mushroom</name>
    <name type="synonym">Agaricus melleus</name>
    <dbReference type="NCBI Taxonomy" id="47429"/>
    <lineage>
        <taxon>Eukaryota</taxon>
        <taxon>Fungi</taxon>
        <taxon>Dikarya</taxon>
        <taxon>Basidiomycota</taxon>
        <taxon>Agaricomycotina</taxon>
        <taxon>Agaricomycetes</taxon>
        <taxon>Agaricomycetidae</taxon>
        <taxon>Agaricales</taxon>
        <taxon>Marasmiineae</taxon>
        <taxon>Physalacriaceae</taxon>
        <taxon>Armillaria</taxon>
    </lineage>
</organism>
<sequence length="2209" mass="237667">MSPSLVVPVFAGHGTTAINSTSLRERAVTDASSSSGALLLDACYYAFNVELSTLSPSEASAVGINPDHFKDPKSLLLLPSHEHYFTNSVVTAATLFLVQTLRYLASVQASSSASFASTLQMNSEHGLGIVGFSSGILPACVVGSSETTLEFISNAVETFRLAFWIGVRLQVHKASVETPELLGESPLPWSLAFLSMSPAAAESAIQSFHKSFEGTPELRVTSVVSETSVTISGRPDILAAFAAQLPPSGPVHKTTVDALYHSSSHHDGVRSQVLADVIRRNIRFPTHADIKIPVRSTYSGELLNKSPEGSASFVEQVIDMILTQPVNWDKVTEALVRAAPEAEVVHLLNFGPGAGLTKGIERYFPSGKVSSIDLSTEAVHTSTLQMPSSVQEPIAICGMSVNMPGAQSVAKLWEVLEKGINTVSEVPEHRFKVSDYNDPKKKSRTMAAHTGNFIDEPDAFDNKFFNISPREARSMDPQQRVLLHTAYEALEDAGYVPNSTPTNNPETFGCYVGVATNDYVQNLRNDIDVYYSTGTLRAFLSGRISYALQFSGPSIVVDTACSSSLIAVYQACRALMNRDCNAAVAGGVNVIGSPDMFLGLDRGHFLSPTGQCKAFDASADGYSRSEGCGIFVLKRLSDAVAENDQILGVIRGVEVNQSGNAYSITRPHAPTQENLFTQTLERSGLDASRISVVEAHGTGTQAGDPIELESIRGIFAKNRKTNNPLHITSVKANIGHLEAASGAAALAKLLLMLRHRTIPRLISLKNLNPRIKPLASDNVIIDTKQVAWAVPDESLPRVALLNNFGAAGSNGALLLEEYIPKSSEKIEVSSTFIVGLSAKNEQALVDLRASYIEYLRSPASAGVSLADIAYTATARRRIFSHRFAVTVKSKEELAHKLELASGKTVSDKAPGKVVFVFSGQGGQYLGMGSALYKTSTLFKSAIDECEYFLKKNNFPGVLPIITSDGESSELTPVEEFEANQAAIFALEYGLAKLWMSWGVTPTAVVGHSLGEYAAHVVAGVLSLESALTLVAHRVRIMMRTCELDTTGMIAINLGSGAVTDILSSSPDFSGISIACYNSATDCVASGAIGQLDALKAHLDKNVHCKSVRLKVPFGYHSSAMQPLLEEFGALAKRVTVHAPKIPVISNPLGRVVREGDKSAFNAEYYLSHCADPVQFESGISALIDDVSFMDIAAWIELGPHPTTLPMLTVHPGVSKEALLVGSLKKRQDDNLTLSSSLSQLYTSNVPVQWRDVFADVSAACVSLPSYPWQKSKFWVAWKEDSPAPASSTEGSPAPTKAFNPVNDFGMLQSWAQFPSAANSQTAIFETPISLLKTSITGHIVGDVPLCPASVYHELALAGIEASKAHLSLPLQGSHSALFNIDYVKPLVYSKDVARVVKTTIAMNTDGSGTFTVESYADSEPESVHCSGQFRPLLVADTTTKFNRMAPVVSRRTAAICSGEDDEAEVITTRTAYEIIFTRVVRYAKEYHTMKNVTISKNGMEGYAIVKLPKDHDRSKFVVHPVFMDTMLHVAGFLANMQGGDNDAYICSKVKSVKAVPSLINNDATYGVFVVNAWVESEGIMLSDAIAVDISEHGQIVAQLKGMCFKKLRLNTLQRSLAMHAGHTSPAPAPKRTVAAAPKPKITEVAPALGPRSSPAKRSVDVQNTVLKIIGDTCGIEVSALDVNADLETYGVDSLMSIEILRKFEESFLQMQFDTTIFSTCNNITELVREISSTIGSQAATAVNTPETASTPEPTLQGDAPQSTDVRSILLELISSFTGFEISSFDLNADADSAYGLDKFLFIPLFSKLQSFFPDVTLDPAKPSVCSTIGELLDEVTAQVQAGPSSSSPGIVDTKPMFVSVLGLDESDIQDDTEFETIGLDSLTAIEALHAIQTKYGLELPSNLFELHNTVKAVNQYISSKQPGKSPKPSEEATMDPDKEEDLSDLTPEQVQSVVRVLRLDEVPMSVQKSSSSGSPLFLFHDGSGAVNYLRRLGSVGREFWGFNNPNYATGKPWGSVEAMASAYADYAVKVAGSRPVIFGGWSFGGVVGFEAARQLMRRGVPVKGVVLIDSPFPVDHVPSSNEFMAVTAGAFTRGGRTPIGRMMWKQLQQNAPLLKTYDPRIAGGPYPPLVLLHNQEGIPPDAFLPYPVPRWMSEKGTDPCLLADDWSGLVGASIKVIHLPGTHFTTFATPHLGAVTQALVDGCAYLDEL</sequence>
<protein>
    <recommendedName>
        <fullName evidence="17">Orsellinic acid synthase armB</fullName>
        <shortName evidence="17">OAS</shortName>
        <ecNumber evidence="10">2.3.1.-</ecNumber>
    </recommendedName>
    <alternativeName>
        <fullName evidence="17">Melledonol synthase</fullName>
    </alternativeName>
    <alternativeName>
        <fullName evidence="17">Melleolides biosynthesis cluster protein armB</fullName>
    </alternativeName>
    <alternativeName>
        <fullName evidence="17">Non-reducing polyketide synthase armB</fullName>
    </alternativeName>
</protein>
<evidence type="ECO:0000250" key="1">
    <source>
        <dbReference type="UniProtKB" id="J4UHQ6"/>
    </source>
</evidence>
<evidence type="ECO:0000250" key="2">
    <source>
        <dbReference type="UniProtKB" id="P0DL13"/>
    </source>
</evidence>
<evidence type="ECO:0000255" key="3"/>
<evidence type="ECO:0000255" key="4">
    <source>
        <dbReference type="PROSITE-ProRule" id="PRU00258"/>
    </source>
</evidence>
<evidence type="ECO:0000255" key="5">
    <source>
        <dbReference type="PROSITE-ProRule" id="PRU01348"/>
    </source>
</evidence>
<evidence type="ECO:0000255" key="6">
    <source>
        <dbReference type="PROSITE-ProRule" id="PRU01363"/>
    </source>
</evidence>
<evidence type="ECO:0000256" key="7">
    <source>
        <dbReference type="SAM" id="MobiDB-lite"/>
    </source>
</evidence>
<evidence type="ECO:0000269" key="8">
    <source>
    </source>
</evidence>
<evidence type="ECO:0000269" key="9">
    <source>
    </source>
</evidence>
<evidence type="ECO:0000269" key="10">
    <source>
    </source>
</evidence>
<evidence type="ECO:0000269" key="11">
    <source>
    </source>
</evidence>
<evidence type="ECO:0000269" key="12">
    <source>
    </source>
</evidence>
<evidence type="ECO:0000269" key="13">
    <source>
    </source>
</evidence>
<evidence type="ECO:0000269" key="14">
    <source>
    </source>
</evidence>
<evidence type="ECO:0000269" key="15">
    <source>
    </source>
</evidence>
<evidence type="ECO:0000269" key="16">
    <source>
    </source>
</evidence>
<evidence type="ECO:0000303" key="17">
    <source>
    </source>
</evidence>
<evidence type="ECO:0000305" key="18">
    <source>
    </source>
</evidence>
<evidence type="ECO:0000305" key="19">
    <source>
    </source>
</evidence>
<evidence type="ECO:0000305" key="20">
    <source>
    </source>
</evidence>
<dbReference type="EC" id="2.3.1.-" evidence="10"/>
<dbReference type="EMBL" id="JQ801748">
    <property type="protein sequence ID" value="AFL91703.1"/>
    <property type="molecule type" value="Genomic_DNA"/>
</dbReference>
<dbReference type="SMR" id="I3ZNU9"/>
<dbReference type="ESTHER" id="armos-armb">
    <property type="family name" value="Thioesterase"/>
</dbReference>
<dbReference type="BioCyc" id="MetaCyc:MONOMER-20281"/>
<dbReference type="GO" id="GO:0004315">
    <property type="term" value="F:3-oxoacyl-[acyl-carrier-protein] synthase activity"/>
    <property type="evidence" value="ECO:0007669"/>
    <property type="project" value="InterPro"/>
</dbReference>
<dbReference type="GO" id="GO:0004312">
    <property type="term" value="F:fatty acid synthase activity"/>
    <property type="evidence" value="ECO:0007669"/>
    <property type="project" value="TreeGrafter"/>
</dbReference>
<dbReference type="GO" id="GO:0031177">
    <property type="term" value="F:phosphopantetheine binding"/>
    <property type="evidence" value="ECO:0007669"/>
    <property type="project" value="InterPro"/>
</dbReference>
<dbReference type="GO" id="GO:0006633">
    <property type="term" value="P:fatty acid biosynthetic process"/>
    <property type="evidence" value="ECO:0007669"/>
    <property type="project" value="InterPro"/>
</dbReference>
<dbReference type="GO" id="GO:0046189">
    <property type="term" value="P:phenol-containing compound biosynthetic process"/>
    <property type="evidence" value="ECO:0007669"/>
    <property type="project" value="UniProtKB-ARBA"/>
</dbReference>
<dbReference type="GO" id="GO:0030639">
    <property type="term" value="P:polyketide biosynthetic process"/>
    <property type="evidence" value="ECO:0007669"/>
    <property type="project" value="UniProtKB-ARBA"/>
</dbReference>
<dbReference type="GO" id="GO:0009403">
    <property type="term" value="P:toxin biosynthetic process"/>
    <property type="evidence" value="ECO:0007669"/>
    <property type="project" value="UniProtKB-ARBA"/>
</dbReference>
<dbReference type="CDD" id="cd00833">
    <property type="entry name" value="PKS"/>
    <property type="match status" value="1"/>
</dbReference>
<dbReference type="Gene3D" id="3.30.70.3290">
    <property type="match status" value="1"/>
</dbReference>
<dbReference type="Gene3D" id="3.40.47.10">
    <property type="match status" value="1"/>
</dbReference>
<dbReference type="Gene3D" id="1.10.1200.10">
    <property type="entry name" value="ACP-like"/>
    <property type="match status" value="2"/>
</dbReference>
<dbReference type="Gene3D" id="3.40.50.1820">
    <property type="entry name" value="alpha/beta hydrolase"/>
    <property type="match status" value="1"/>
</dbReference>
<dbReference type="Gene3D" id="3.40.366.10">
    <property type="entry name" value="Malonyl-Coenzyme A Acyl Carrier Protein, domain 2"/>
    <property type="match status" value="3"/>
</dbReference>
<dbReference type="Gene3D" id="3.10.129.110">
    <property type="entry name" value="Polyketide synthase dehydratase"/>
    <property type="match status" value="1"/>
</dbReference>
<dbReference type="InterPro" id="IPR029058">
    <property type="entry name" value="AB_hydrolase_fold"/>
</dbReference>
<dbReference type="InterPro" id="IPR001227">
    <property type="entry name" value="Ac_transferase_dom_sf"/>
</dbReference>
<dbReference type="InterPro" id="IPR036736">
    <property type="entry name" value="ACP-like_sf"/>
</dbReference>
<dbReference type="InterPro" id="IPR014043">
    <property type="entry name" value="Acyl_transferase_dom"/>
</dbReference>
<dbReference type="InterPro" id="IPR016035">
    <property type="entry name" value="Acyl_Trfase/lysoPLipase"/>
</dbReference>
<dbReference type="InterPro" id="IPR018201">
    <property type="entry name" value="Ketoacyl_synth_AS"/>
</dbReference>
<dbReference type="InterPro" id="IPR014031">
    <property type="entry name" value="Ketoacyl_synth_C"/>
</dbReference>
<dbReference type="InterPro" id="IPR014030">
    <property type="entry name" value="Ketoacyl_synth_N"/>
</dbReference>
<dbReference type="InterPro" id="IPR016036">
    <property type="entry name" value="Malonyl_transacylase_ACP-bd"/>
</dbReference>
<dbReference type="InterPro" id="IPR020841">
    <property type="entry name" value="PKS_Beta-ketoAc_synthase_dom"/>
</dbReference>
<dbReference type="InterPro" id="IPR042104">
    <property type="entry name" value="PKS_dehydratase_sf"/>
</dbReference>
<dbReference type="InterPro" id="IPR049551">
    <property type="entry name" value="PKS_DH_C"/>
</dbReference>
<dbReference type="InterPro" id="IPR049552">
    <property type="entry name" value="PKS_DH_N"/>
</dbReference>
<dbReference type="InterPro" id="IPR049900">
    <property type="entry name" value="PKS_mFAS_DH"/>
</dbReference>
<dbReference type="InterPro" id="IPR050091">
    <property type="entry name" value="PKS_NRPS_Biosynth_Enz"/>
</dbReference>
<dbReference type="InterPro" id="IPR020806">
    <property type="entry name" value="PKS_PP-bd"/>
</dbReference>
<dbReference type="InterPro" id="IPR020802">
    <property type="entry name" value="PKS_thioesterase"/>
</dbReference>
<dbReference type="InterPro" id="IPR009081">
    <property type="entry name" value="PP-bd_ACP"/>
</dbReference>
<dbReference type="InterPro" id="IPR006162">
    <property type="entry name" value="Ppantetheine_attach_site"/>
</dbReference>
<dbReference type="InterPro" id="IPR030918">
    <property type="entry name" value="PT_fungal_PKS"/>
</dbReference>
<dbReference type="InterPro" id="IPR032088">
    <property type="entry name" value="SAT"/>
</dbReference>
<dbReference type="InterPro" id="IPR001031">
    <property type="entry name" value="Thioesterase"/>
</dbReference>
<dbReference type="InterPro" id="IPR016039">
    <property type="entry name" value="Thiolase-like"/>
</dbReference>
<dbReference type="NCBIfam" id="TIGR04532">
    <property type="entry name" value="PT_fungal_PKS"/>
    <property type="match status" value="1"/>
</dbReference>
<dbReference type="PANTHER" id="PTHR43775">
    <property type="entry name" value="FATTY ACID SYNTHASE"/>
    <property type="match status" value="1"/>
</dbReference>
<dbReference type="PANTHER" id="PTHR43775:SF21">
    <property type="entry name" value="NON-REDUCING POLYKETIDE SYNTHASE AUSA-RELATED"/>
    <property type="match status" value="1"/>
</dbReference>
<dbReference type="Pfam" id="PF00698">
    <property type="entry name" value="Acyl_transf_1"/>
    <property type="match status" value="1"/>
</dbReference>
<dbReference type="Pfam" id="PF22621">
    <property type="entry name" value="CurL-like_PKS_C"/>
    <property type="match status" value="1"/>
</dbReference>
<dbReference type="Pfam" id="PF00109">
    <property type="entry name" value="ketoacyl-synt"/>
    <property type="match status" value="1"/>
</dbReference>
<dbReference type="Pfam" id="PF02801">
    <property type="entry name" value="Ketoacyl-synt_C"/>
    <property type="match status" value="1"/>
</dbReference>
<dbReference type="Pfam" id="PF21089">
    <property type="entry name" value="PKS_DH_N"/>
    <property type="match status" value="1"/>
</dbReference>
<dbReference type="Pfam" id="PF00550">
    <property type="entry name" value="PP-binding"/>
    <property type="match status" value="2"/>
</dbReference>
<dbReference type="Pfam" id="PF14765">
    <property type="entry name" value="PS-DH"/>
    <property type="match status" value="1"/>
</dbReference>
<dbReference type="Pfam" id="PF16073">
    <property type="entry name" value="SAT"/>
    <property type="match status" value="1"/>
</dbReference>
<dbReference type="Pfam" id="PF00975">
    <property type="entry name" value="Thioesterase"/>
    <property type="match status" value="1"/>
</dbReference>
<dbReference type="SMART" id="SM00827">
    <property type="entry name" value="PKS_AT"/>
    <property type="match status" value="1"/>
</dbReference>
<dbReference type="SMART" id="SM00825">
    <property type="entry name" value="PKS_KS"/>
    <property type="match status" value="1"/>
</dbReference>
<dbReference type="SMART" id="SM00823">
    <property type="entry name" value="PKS_PP"/>
    <property type="match status" value="2"/>
</dbReference>
<dbReference type="SMART" id="SM01294">
    <property type="entry name" value="PKS_PP_betabranch"/>
    <property type="match status" value="1"/>
</dbReference>
<dbReference type="SMART" id="SM00824">
    <property type="entry name" value="PKS_TE"/>
    <property type="match status" value="1"/>
</dbReference>
<dbReference type="SUPFAM" id="SSF47336">
    <property type="entry name" value="ACP-like"/>
    <property type="match status" value="2"/>
</dbReference>
<dbReference type="SUPFAM" id="SSF53474">
    <property type="entry name" value="alpha/beta-Hydrolases"/>
    <property type="match status" value="1"/>
</dbReference>
<dbReference type="SUPFAM" id="SSF52151">
    <property type="entry name" value="FabD/lysophospholipase-like"/>
    <property type="match status" value="2"/>
</dbReference>
<dbReference type="SUPFAM" id="SSF55048">
    <property type="entry name" value="Probable ACP-binding domain of malonyl-CoA ACP transacylase"/>
    <property type="match status" value="1"/>
</dbReference>
<dbReference type="SUPFAM" id="SSF53901">
    <property type="entry name" value="Thiolase-like"/>
    <property type="match status" value="1"/>
</dbReference>
<dbReference type="PROSITE" id="PS50075">
    <property type="entry name" value="CARRIER"/>
    <property type="match status" value="2"/>
</dbReference>
<dbReference type="PROSITE" id="PS00606">
    <property type="entry name" value="KS3_1"/>
    <property type="match status" value="1"/>
</dbReference>
<dbReference type="PROSITE" id="PS52004">
    <property type="entry name" value="KS3_2"/>
    <property type="match status" value="1"/>
</dbReference>
<dbReference type="PROSITE" id="PS00012">
    <property type="entry name" value="PHOSPHOPANTETHEINE"/>
    <property type="match status" value="2"/>
</dbReference>
<dbReference type="PROSITE" id="PS52019">
    <property type="entry name" value="PKS_MFAS_DH"/>
    <property type="match status" value="1"/>
</dbReference>
<accession>I3ZNU9</accession>
<comment type="function">
    <text evidence="2 10 12 19">Non-reducing polyketide synthase, part of the gene cluster that mediates the biosynthesis of melleolides, a range of antifungal and phytotoxic polyketide derivatives composed of an orsellinic acid (OA) moiety esterified to various sesquiterpene alcohols (PubMed:23993460). The first step in melleolides biosynthesis is performed by the delta(6)-protoilludene synthase PRO1 which catalyzes the cyclization of farnesyl diphosphate to protoilludene (By similarity). The orsellinic acid synthase armB produces OA by condensing acetyl-CoA with 3 malonyl-CoA units in a three-round chain elongation reaction folowed by a C2-C7 ring closure (PubMed:23993460). ArmB further catalyzes the trans-esterification of OA to the various sesquiterpene alcohols resulting from the hydroxylation of protoilludene (PubMed:26655762). The melleolides cluster also includes 5 cytochrome P450 monooxygenases, 4 NAD(+)-dependent oxidoreductases, one flavin-dependent oxidoreductase, and one O-methyltransferase (Probable). The cytochrome P450 monooxygenases may be involved in protoilludene hydroxylation to elaborate melleolides with multiple alcohol groups, such as melleolide D, which carries alcohol functionalities at C-4, C-5, C-10, and C-13 (Probable). The role of the NAD(+)-dependent enzymes remains unknown (Probable). Numerous melleolides, including arnamial, show 5'-O-methylation of the aromatic moiety which may be catalyzed by the methyltransferase encoded in the cluster (Probable). The flavin-dependent oxidoreductase might represent the dehydrogenase yielding the aldehyde in position 1 of arnamial and other melleolides (Probable). Finally, several halogenase localized outside of the cluster (armH1 to armH5), are able to catalyze the transfer of a single chlorine atom to the melleolide backbone, resulting in a 6'-chloromelleolide product (PubMed:26655762).</text>
</comment>
<comment type="catalytic activity">
    <reaction evidence="10">
        <text>3 malonyl-CoA + acetyl-CoA + 2 H(+) = orsellinate + 3 CO2 + 4 CoA</text>
        <dbReference type="Rhea" id="RHEA:62972"/>
        <dbReference type="ChEBI" id="CHEBI:15378"/>
        <dbReference type="ChEBI" id="CHEBI:16162"/>
        <dbReference type="ChEBI" id="CHEBI:16526"/>
        <dbReference type="ChEBI" id="CHEBI:57287"/>
        <dbReference type="ChEBI" id="CHEBI:57288"/>
        <dbReference type="ChEBI" id="CHEBI:57384"/>
    </reaction>
    <physiologicalReaction direction="left-to-right" evidence="10">
        <dbReference type="Rhea" id="RHEA:62973"/>
    </physiologicalReaction>
</comment>
<comment type="pathway">
    <text evidence="10">Secondary metabolite biosynthesis.</text>
</comment>
<comment type="domain">
    <text evidence="18">Multidomain protein; including a starter unit:ACP transacylase (SAT) that selects the starter unit; a ketosynthase (KS) that catalyzes repeated decarboxylative condensation to elongate the polyketide backbone; a malonyl-CoA:ACP transacylase (MAT) that selects and transfers the extender unit malonyl-CoA; a product template (PT) domain that controls the immediate cyclization regioselectivity of the reactive polyketide backbone; and an acyl-carrier protein (ACP) that serves as the tether of the growing and completed polyketide via its phosphopantetheinyl arm.</text>
</comment>
<comment type="domain">
    <text evidence="10">The release of the polyketide chain from the non-reducing polyketide synthase is mediated by the thioesterase (TE) domain localized at the C-ter of the protein, which accepts the sesquiterpene alcohols as substrate to offload the finished ketide from the PKS assembly line.</text>
</comment>
<comment type="biotechnology">
    <text evidence="8 9 11 13 14 15">Melleolide sesquiterpene aryl esters are cytotoxic secondary products with anti-cancer potential (PubMed:21376582, PubMed:26952552). Armillaridin shows therapeutic and radiosensitizing effects on human esophageal cancer cells (PubMed:23864890). Armillaridin induces autophagy-associated cell death in human chronic myelogenous leukemia as well as of hepatocellular carcinoma cells (PubMed:27592257, PubMed:31488037). Armillaridin can also inhibit the differentiation and activation of human macrophages and thus might have potential to be developed as a biological response modifier for inflammatory diseases (PubMed:25746621).</text>
</comment>
<comment type="miscellaneous">
    <text evidence="16 20">Armillaria species are both devastating forest pathogens and some of the largest and oldest terrestrial organisms on Earth (Probable) (PubMed:31746694). They forage for hosts and achieve immense colony sizes via rhizomorphs, root-like multicellular structures of clonal dispersal (Probable).</text>
</comment>